<feature type="chain" id="PRO_1000122451" description="Homoserine kinase">
    <location>
        <begin position="1"/>
        <end position="322"/>
    </location>
</feature>
<feature type="binding site" evidence="1">
    <location>
        <begin position="106"/>
        <end position="116"/>
    </location>
    <ligand>
        <name>ATP</name>
        <dbReference type="ChEBI" id="CHEBI:30616"/>
    </ligand>
</feature>
<organism>
    <name type="scientific">Xanthomonas campestris pv. campestris (strain B100)</name>
    <dbReference type="NCBI Taxonomy" id="509169"/>
    <lineage>
        <taxon>Bacteria</taxon>
        <taxon>Pseudomonadati</taxon>
        <taxon>Pseudomonadota</taxon>
        <taxon>Gammaproteobacteria</taxon>
        <taxon>Lysobacterales</taxon>
        <taxon>Lysobacteraceae</taxon>
        <taxon>Xanthomonas</taxon>
    </lineage>
</organism>
<keyword id="KW-0028">Amino-acid biosynthesis</keyword>
<keyword id="KW-0067">ATP-binding</keyword>
<keyword id="KW-0963">Cytoplasm</keyword>
<keyword id="KW-0418">Kinase</keyword>
<keyword id="KW-0547">Nucleotide-binding</keyword>
<keyword id="KW-0791">Threonine biosynthesis</keyword>
<keyword id="KW-0808">Transferase</keyword>
<dbReference type="EC" id="2.7.1.39" evidence="1"/>
<dbReference type="EMBL" id="AM920689">
    <property type="protein sequence ID" value="CAP51441.1"/>
    <property type="molecule type" value="Genomic_DNA"/>
</dbReference>
<dbReference type="SMR" id="B0RSK6"/>
<dbReference type="KEGG" id="xca:xcc-b100_2088"/>
<dbReference type="HOGENOM" id="CLU_041243_1_1_6"/>
<dbReference type="UniPathway" id="UPA00050">
    <property type="reaction ID" value="UER00064"/>
</dbReference>
<dbReference type="Proteomes" id="UP000001188">
    <property type="component" value="Chromosome"/>
</dbReference>
<dbReference type="GO" id="GO:0005737">
    <property type="term" value="C:cytoplasm"/>
    <property type="evidence" value="ECO:0007669"/>
    <property type="project" value="UniProtKB-SubCell"/>
</dbReference>
<dbReference type="GO" id="GO:0005524">
    <property type="term" value="F:ATP binding"/>
    <property type="evidence" value="ECO:0007669"/>
    <property type="project" value="UniProtKB-UniRule"/>
</dbReference>
<dbReference type="GO" id="GO:0004413">
    <property type="term" value="F:homoserine kinase activity"/>
    <property type="evidence" value="ECO:0007669"/>
    <property type="project" value="UniProtKB-UniRule"/>
</dbReference>
<dbReference type="GO" id="GO:0009088">
    <property type="term" value="P:threonine biosynthetic process"/>
    <property type="evidence" value="ECO:0007669"/>
    <property type="project" value="UniProtKB-UniRule"/>
</dbReference>
<dbReference type="Gene3D" id="3.30.230.10">
    <property type="match status" value="1"/>
</dbReference>
<dbReference type="Gene3D" id="3.30.70.890">
    <property type="entry name" value="GHMP kinase, C-terminal domain"/>
    <property type="match status" value="1"/>
</dbReference>
<dbReference type="HAMAP" id="MF_00384">
    <property type="entry name" value="Homoser_kinase"/>
    <property type="match status" value="1"/>
</dbReference>
<dbReference type="InterPro" id="IPR013750">
    <property type="entry name" value="GHMP_kinase_C_dom"/>
</dbReference>
<dbReference type="InterPro" id="IPR036554">
    <property type="entry name" value="GHMP_kinase_C_sf"/>
</dbReference>
<dbReference type="InterPro" id="IPR006204">
    <property type="entry name" value="GHMP_kinase_N_dom"/>
</dbReference>
<dbReference type="InterPro" id="IPR000870">
    <property type="entry name" value="Homoserine_kinase"/>
</dbReference>
<dbReference type="InterPro" id="IPR020568">
    <property type="entry name" value="Ribosomal_Su5_D2-typ_SF"/>
</dbReference>
<dbReference type="InterPro" id="IPR014721">
    <property type="entry name" value="Ribsml_uS5_D2-typ_fold_subgr"/>
</dbReference>
<dbReference type="NCBIfam" id="NF002288">
    <property type="entry name" value="PRK01212.1-4"/>
    <property type="match status" value="1"/>
</dbReference>
<dbReference type="PANTHER" id="PTHR20861:SF1">
    <property type="entry name" value="HOMOSERINE KINASE"/>
    <property type="match status" value="1"/>
</dbReference>
<dbReference type="PANTHER" id="PTHR20861">
    <property type="entry name" value="HOMOSERINE/4-DIPHOSPHOCYTIDYL-2-C-METHYL-D-ERYTHRITOL KINASE"/>
    <property type="match status" value="1"/>
</dbReference>
<dbReference type="Pfam" id="PF08544">
    <property type="entry name" value="GHMP_kinases_C"/>
    <property type="match status" value="1"/>
</dbReference>
<dbReference type="Pfam" id="PF00288">
    <property type="entry name" value="GHMP_kinases_N"/>
    <property type="match status" value="1"/>
</dbReference>
<dbReference type="PIRSF" id="PIRSF000676">
    <property type="entry name" value="Homoser_kin"/>
    <property type="match status" value="1"/>
</dbReference>
<dbReference type="PRINTS" id="PR00958">
    <property type="entry name" value="HOMSERKINASE"/>
</dbReference>
<dbReference type="SUPFAM" id="SSF55060">
    <property type="entry name" value="GHMP Kinase, C-terminal domain"/>
    <property type="match status" value="1"/>
</dbReference>
<dbReference type="SUPFAM" id="SSF54211">
    <property type="entry name" value="Ribosomal protein S5 domain 2-like"/>
    <property type="match status" value="1"/>
</dbReference>
<proteinExistence type="inferred from homology"/>
<evidence type="ECO:0000255" key="1">
    <source>
        <dbReference type="HAMAP-Rule" id="MF_00384"/>
    </source>
</evidence>
<comment type="function">
    <text evidence="1">Catalyzes the ATP-dependent phosphorylation of L-homoserine to L-homoserine phosphate.</text>
</comment>
<comment type="catalytic activity">
    <reaction evidence="1">
        <text>L-homoserine + ATP = O-phospho-L-homoserine + ADP + H(+)</text>
        <dbReference type="Rhea" id="RHEA:13985"/>
        <dbReference type="ChEBI" id="CHEBI:15378"/>
        <dbReference type="ChEBI" id="CHEBI:30616"/>
        <dbReference type="ChEBI" id="CHEBI:57476"/>
        <dbReference type="ChEBI" id="CHEBI:57590"/>
        <dbReference type="ChEBI" id="CHEBI:456216"/>
        <dbReference type="EC" id="2.7.1.39"/>
    </reaction>
</comment>
<comment type="pathway">
    <text evidence="1">Amino-acid biosynthesis; L-threonine biosynthesis; L-threonine from L-aspartate: step 4/5.</text>
</comment>
<comment type="subcellular location">
    <subcellularLocation>
        <location evidence="1">Cytoplasm</location>
    </subcellularLocation>
</comment>
<comment type="similarity">
    <text evidence="1">Belongs to the GHMP kinase family. Homoserine kinase subfamily.</text>
</comment>
<reference key="1">
    <citation type="journal article" date="2008" name="J. Biotechnol.">
        <title>The genome of Xanthomonas campestris pv. campestris B100 and its use for the reconstruction of metabolic pathways involved in xanthan biosynthesis.</title>
        <authorList>
            <person name="Vorhoelter F.-J."/>
            <person name="Schneiker S."/>
            <person name="Goesmann A."/>
            <person name="Krause L."/>
            <person name="Bekel T."/>
            <person name="Kaiser O."/>
            <person name="Linke B."/>
            <person name="Patschkowski T."/>
            <person name="Rueckert C."/>
            <person name="Schmid J."/>
            <person name="Sidhu V.K."/>
            <person name="Sieber V."/>
            <person name="Tauch A."/>
            <person name="Watt S.A."/>
            <person name="Weisshaar B."/>
            <person name="Becker A."/>
            <person name="Niehaus K."/>
            <person name="Puehler A."/>
        </authorList>
    </citation>
    <scope>NUCLEOTIDE SEQUENCE [LARGE SCALE GENOMIC DNA]</scope>
    <source>
        <strain>B100</strain>
    </source>
</reference>
<accession>B0RSK6</accession>
<gene>
    <name evidence="1" type="primary">thrB</name>
    <name type="ordered locus">xcc-b100_2088</name>
</gene>
<name>KHSE_XANCB</name>
<protein>
    <recommendedName>
        <fullName evidence="1">Homoserine kinase</fullName>
        <shortName evidence="1">HK</shortName>
        <shortName evidence="1">HSK</shortName>
        <ecNumber evidence="1">2.7.1.39</ecNumber>
    </recommendedName>
</protein>
<sequence length="322" mass="32881">MNQMVDMGHAVPAARGLREARAFAPASVANVAVGFDLLGYPLDGVGDTVTVRRIDAPVVRIAAIRGTTVALPLEAERNTAGAALMSLRAALALPFGFELEIDKGIALSSGMGGSAASCVAALVAANALLDTPVSTDQLYQHALDGEAVASGSRHGDNLGPLFLGGLVLCTLERLVPIAVPEAWHSLVVHPEAVLETRRAREALAGDYRLSEFVAQSTNLALVLAGCHAGDADLVRAGLRDVLVEPRRAPLITGFAQAKQAALAHAALGASISGAGPSVFAWFETRAAAAAAAPAVQAAFAGVGLDSQAWVTPINSPAARLLA</sequence>